<organismHost>
    <name type="scientific">Acheta domesticus</name>
    <name type="common">House cricket</name>
    <dbReference type="NCBI Taxonomy" id="6997"/>
</organismHost>
<organismHost>
    <name type="scientific">Chilo suppressalis</name>
    <name type="common">Asiatic rice borer moth</name>
    <dbReference type="NCBI Taxonomy" id="168631"/>
</organismHost>
<organismHost>
    <name type="scientific">Gryllus bimaculatus</name>
    <name type="common">Two-spotted cricket</name>
    <dbReference type="NCBI Taxonomy" id="6999"/>
</organismHost>
<organismHost>
    <name type="scientific">Gryllus campestris</name>
    <dbReference type="NCBI Taxonomy" id="58607"/>
</organismHost>
<organismHost>
    <name type="scientific">Spodoptera frugiperda</name>
    <name type="common">Fall armyworm</name>
    <dbReference type="NCBI Taxonomy" id="7108"/>
</organismHost>
<sequence length="360" mass="43031">MNKITFMGVELEEQGPSDLIVKALGKSIKLMDLETFIDTTGFEKDPIMNDYFWQIMVTKQRTHLSAMLLQCLGYEGEFRVQQQHFKRFLKSNNIHPLELTSSDPDIKNYPTIQDEMKLLKPNVISNRKWLIVEPREFKKVIMKLNTKHGDRIREYYLCLEELLRLYLEYCVYFKEREAKLQITTLEQKLEQMNITMIEMKEEMNLSMEEHADKLDTLVDQNEELKLDVSEANEKLETVTHKLGIAVEDRSPRLEQKPLRERFVLFKRNVKNARFQYYAIRGQSIYVNGRLTLYNERYPNLEIIIDIFCQPNPRNLFLRFKNYVKDDERFNFAGNNVECDITYESIMKEIFEKLNEEKRNV</sequence>
<accession>Q91FV9</accession>
<gene>
    <name type="ORF">IIV6-212L</name>
</gene>
<dbReference type="EMBL" id="AF303741">
    <property type="protein sequence ID" value="AAK82074.1"/>
    <property type="molecule type" value="Genomic_DNA"/>
</dbReference>
<dbReference type="RefSeq" id="NP_149675.1">
    <property type="nucleotide sequence ID" value="NC_003038.1"/>
</dbReference>
<dbReference type="SMR" id="Q91FV9"/>
<dbReference type="KEGG" id="vg:1733331"/>
<dbReference type="OrthoDB" id="13638at10239"/>
<dbReference type="Proteomes" id="UP000001359">
    <property type="component" value="Genome"/>
</dbReference>
<dbReference type="InterPro" id="IPR022549">
    <property type="entry name" value="DUF3627"/>
</dbReference>
<dbReference type="InterPro" id="IPR018879">
    <property type="entry name" value="MSV199_dom"/>
</dbReference>
<dbReference type="Pfam" id="PF12299">
    <property type="entry name" value="DUF3627"/>
    <property type="match status" value="1"/>
</dbReference>
<dbReference type="Pfam" id="PF10553">
    <property type="entry name" value="MSV199"/>
    <property type="match status" value="1"/>
</dbReference>
<evidence type="ECO:0000255" key="1"/>
<name>212L_IIV6</name>
<protein>
    <recommendedName>
        <fullName>Putative MSV199 domain-containing protein 212L</fullName>
    </recommendedName>
</protein>
<feature type="chain" id="PRO_0000377913" description="Putative MSV199 domain-containing protein 212L">
    <location>
        <begin position="1"/>
        <end position="360"/>
    </location>
</feature>
<feature type="coiled-coil region" evidence="1">
    <location>
        <begin position="173"/>
        <end position="243"/>
    </location>
</feature>
<reference key="1">
    <citation type="journal article" date="2001" name="Virology">
        <title>Analysis of the first complete DNA sequence of an invertebrate iridovirus: coding strategy of the genome of Chilo iridescent virus.</title>
        <authorList>
            <person name="Jakob N.J."/>
            <person name="Mueller K."/>
            <person name="Bahr U."/>
            <person name="Darai G."/>
        </authorList>
    </citation>
    <scope>NUCLEOTIDE SEQUENCE [LARGE SCALE GENOMIC DNA]</scope>
</reference>
<reference key="2">
    <citation type="journal article" date="2007" name="Virol. J.">
        <title>Comparative genomic analysis of the family Iridoviridae: re-annotating and defining the core set of iridovirus genes.</title>
        <authorList>
            <person name="Eaton H.E."/>
            <person name="Metcalf J."/>
            <person name="Penny E."/>
            <person name="Tcherepanov V."/>
            <person name="Upton C."/>
            <person name="Brunetti C.R."/>
        </authorList>
    </citation>
    <scope>GENOME REANNOTATION</scope>
</reference>
<organism>
    <name type="scientific">Invertebrate iridescent virus 6</name>
    <name type="common">IIV-6</name>
    <name type="synonym">Chilo iridescent virus</name>
    <dbReference type="NCBI Taxonomy" id="176652"/>
    <lineage>
        <taxon>Viruses</taxon>
        <taxon>Varidnaviria</taxon>
        <taxon>Bamfordvirae</taxon>
        <taxon>Nucleocytoviricota</taxon>
        <taxon>Megaviricetes</taxon>
        <taxon>Pimascovirales</taxon>
        <taxon>Iridoviridae</taxon>
        <taxon>Betairidovirinae</taxon>
        <taxon>Iridovirus</taxon>
    </lineage>
</organism>
<keyword id="KW-0175">Coiled coil</keyword>
<keyword id="KW-1185">Reference proteome</keyword>
<proteinExistence type="predicted"/>